<keyword id="KW-0067">ATP-binding</keyword>
<keyword id="KW-0131">Cell cycle</keyword>
<keyword id="KW-0132">Cell division</keyword>
<keyword id="KW-0997">Cell inner membrane</keyword>
<keyword id="KW-1003">Cell membrane</keyword>
<keyword id="KW-0159">Chromosome partition</keyword>
<keyword id="KW-0238">DNA-binding</keyword>
<keyword id="KW-0472">Membrane</keyword>
<keyword id="KW-0547">Nucleotide-binding</keyword>
<keyword id="KW-1185">Reference proteome</keyword>
<keyword id="KW-0812">Transmembrane</keyword>
<keyword id="KW-1133">Transmembrane helix</keyword>
<sequence>MGKERKKASVSLSPQTVFAVKTCVYLALACFSGLSLWSFQHNQPYTQNWIGLLGWSLSSFLLYNFGVAAFLIPLNFGWLSFLNMKRTPAPLAFRKAAAFGAIPVCCAVLLSMISPAQNLPQFLATRVPMVVMDLQPPKAYLGGIPFYLLYDGNSFSLKLLIGAVGTGLIFLAILLCAIFYLIPKSFVLKKKALLDDLLKFLKNKFYACWNACKKLLKNLVNNKSYVPKPSLRVPSSPSVAKKEMLKLPTPVISLPLENKDLHDDSSVNRTIFLTPPHPTKRTLSPQKRTDLPNLLPKDSALAPAQTSYKPLPTPSPFVLAGDAPDLPQYHLLSKRNVHRPESLLEELKKKAAILQQTLASFGIEAAIGNICSGPTLAAFEVLPNTGVKVQKIKALENDIALNLQASSIRIIAPIPGKAAVGIEIPNPDPQPVNFRDLLEDYQKGTQRLQVPLLLGKKANGDNFWTDLATMPHLIIAGTTGSGKSVCINTIVMSLIMTSPPTDIKLVIVDPKKVELTGYSQLPHMLTPVITESKEAHSALIWLVREMELRYEILRFLGLRNIQSFNSRTRNVDIEASYDKEISEKMPFIVGIIDELSDLLLSSSHDIETPIVRLAQMARAVGIHLILATQRPSRDVITGLIKANFPSRIAFKVANKVNSQIIIDEPGAENLMGNGDMLVVSPGSFAPVRVQGAYICDDDINKVIKDLCSRFPCKYVIPSFNTYDDPGSMDPEDLDPLFNQAKTLVLQTGNASTTFLQRKLKIGYARAASIIDQLEEARIVGPSEGAKPRQILVQLSNQDD</sequence>
<dbReference type="EMBL" id="AE001273">
    <property type="protein sequence ID" value="AAC68334.1"/>
    <property type="molecule type" value="Genomic_DNA"/>
</dbReference>
<dbReference type="PIR" id="B71478">
    <property type="entry name" value="B71478"/>
</dbReference>
<dbReference type="RefSeq" id="NP_220258.1">
    <property type="nucleotide sequence ID" value="NC_000117.1"/>
</dbReference>
<dbReference type="RefSeq" id="WP_009872116.1">
    <property type="nucleotide sequence ID" value="NC_000117.1"/>
</dbReference>
<dbReference type="SMR" id="O84744"/>
<dbReference type="FunCoup" id="O84744">
    <property type="interactions" value="128"/>
</dbReference>
<dbReference type="STRING" id="272561.CT_739"/>
<dbReference type="EnsemblBacteria" id="AAC68334">
    <property type="protein sequence ID" value="AAC68334"/>
    <property type="gene ID" value="CT_739"/>
</dbReference>
<dbReference type="GeneID" id="884529"/>
<dbReference type="KEGG" id="ctr:CT_739"/>
<dbReference type="PATRIC" id="fig|272561.5.peg.812"/>
<dbReference type="HOGENOM" id="CLU_001981_9_7_0"/>
<dbReference type="InParanoid" id="O84744"/>
<dbReference type="OrthoDB" id="9807790at2"/>
<dbReference type="Proteomes" id="UP000000431">
    <property type="component" value="Chromosome"/>
</dbReference>
<dbReference type="GO" id="GO:0005886">
    <property type="term" value="C:plasma membrane"/>
    <property type="evidence" value="ECO:0007669"/>
    <property type="project" value="UniProtKB-SubCell"/>
</dbReference>
<dbReference type="GO" id="GO:0005524">
    <property type="term" value="F:ATP binding"/>
    <property type="evidence" value="ECO:0007669"/>
    <property type="project" value="UniProtKB-KW"/>
</dbReference>
<dbReference type="GO" id="GO:0016887">
    <property type="term" value="F:ATP hydrolysis activity"/>
    <property type="evidence" value="ECO:0007669"/>
    <property type="project" value="InterPro"/>
</dbReference>
<dbReference type="GO" id="GO:0003677">
    <property type="term" value="F:DNA binding"/>
    <property type="evidence" value="ECO:0007669"/>
    <property type="project" value="UniProtKB-KW"/>
</dbReference>
<dbReference type="GO" id="GO:0015616">
    <property type="term" value="F:DNA translocase activity"/>
    <property type="evidence" value="ECO:0000318"/>
    <property type="project" value="GO_Central"/>
</dbReference>
<dbReference type="GO" id="GO:0051301">
    <property type="term" value="P:cell division"/>
    <property type="evidence" value="ECO:0007669"/>
    <property type="project" value="UniProtKB-KW"/>
</dbReference>
<dbReference type="GO" id="GO:0007059">
    <property type="term" value="P:chromosome segregation"/>
    <property type="evidence" value="ECO:0007669"/>
    <property type="project" value="UniProtKB-KW"/>
</dbReference>
<dbReference type="Gene3D" id="3.30.980.40">
    <property type="match status" value="1"/>
</dbReference>
<dbReference type="Gene3D" id="3.40.50.300">
    <property type="entry name" value="P-loop containing nucleotide triphosphate hydrolases"/>
    <property type="match status" value="1"/>
</dbReference>
<dbReference type="Gene3D" id="1.10.10.10">
    <property type="entry name" value="Winged helix-like DNA-binding domain superfamily/Winged helix DNA-binding domain"/>
    <property type="match status" value="1"/>
</dbReference>
<dbReference type="InterPro" id="IPR003593">
    <property type="entry name" value="AAA+_ATPase"/>
</dbReference>
<dbReference type="InterPro" id="IPR050206">
    <property type="entry name" value="FtsK/SpoIIIE/SftA"/>
</dbReference>
<dbReference type="InterPro" id="IPR025199">
    <property type="entry name" value="FtsK_4TM"/>
</dbReference>
<dbReference type="InterPro" id="IPR041027">
    <property type="entry name" value="FtsK_alpha"/>
</dbReference>
<dbReference type="InterPro" id="IPR002543">
    <property type="entry name" value="FtsK_dom"/>
</dbReference>
<dbReference type="InterPro" id="IPR018541">
    <property type="entry name" value="Ftsk_gamma"/>
</dbReference>
<dbReference type="InterPro" id="IPR027417">
    <property type="entry name" value="P-loop_NTPase"/>
</dbReference>
<dbReference type="InterPro" id="IPR036388">
    <property type="entry name" value="WH-like_DNA-bd_sf"/>
</dbReference>
<dbReference type="InterPro" id="IPR036390">
    <property type="entry name" value="WH_DNA-bd_sf"/>
</dbReference>
<dbReference type="PANTHER" id="PTHR22683:SF41">
    <property type="entry name" value="DNA TRANSLOCASE FTSK"/>
    <property type="match status" value="1"/>
</dbReference>
<dbReference type="PANTHER" id="PTHR22683">
    <property type="entry name" value="SPORULATION PROTEIN RELATED"/>
    <property type="match status" value="1"/>
</dbReference>
<dbReference type="Pfam" id="PF13491">
    <property type="entry name" value="FtsK_4TM"/>
    <property type="match status" value="1"/>
</dbReference>
<dbReference type="Pfam" id="PF17854">
    <property type="entry name" value="FtsK_alpha"/>
    <property type="match status" value="1"/>
</dbReference>
<dbReference type="Pfam" id="PF09397">
    <property type="entry name" value="FtsK_gamma"/>
    <property type="match status" value="1"/>
</dbReference>
<dbReference type="Pfam" id="PF01580">
    <property type="entry name" value="FtsK_SpoIIIE"/>
    <property type="match status" value="1"/>
</dbReference>
<dbReference type="SMART" id="SM00382">
    <property type="entry name" value="AAA"/>
    <property type="match status" value="1"/>
</dbReference>
<dbReference type="SMART" id="SM00843">
    <property type="entry name" value="Ftsk_gamma"/>
    <property type="match status" value="1"/>
</dbReference>
<dbReference type="SUPFAM" id="SSF52540">
    <property type="entry name" value="P-loop containing nucleoside triphosphate hydrolases"/>
    <property type="match status" value="1"/>
</dbReference>
<dbReference type="SUPFAM" id="SSF46785">
    <property type="entry name" value="Winged helix' DNA-binding domain"/>
    <property type="match status" value="1"/>
</dbReference>
<dbReference type="PROSITE" id="PS50901">
    <property type="entry name" value="FTSK"/>
    <property type="match status" value="1"/>
</dbReference>
<comment type="function">
    <text evidence="1">Essential cell division protein that coordinates cell division and chromosome segregation. The N-terminus is involved in assembly of the cell-division machinery. The C-terminus functions as a DNA motor that moves dsDNA in an ATP-dependent manner towards the dif recombination site, which is located within the replication terminus region. Required for activation of the Xer recombinase, allowing activation of chromosome unlinking by recombination (By similarity).</text>
</comment>
<comment type="subunit">
    <text evidence="1">Homohexamer. Forms a ring that surrounds DNA (By similarity).</text>
</comment>
<comment type="subcellular location">
    <subcellularLocation>
        <location evidence="1">Cell inner membrane</location>
        <topology evidence="1">Multi-pass membrane protein</topology>
    </subcellularLocation>
    <text evidence="1">Located at the septum.</text>
</comment>
<comment type="induction">
    <text evidence="5">In infected human monocytes transcripts are present only on day 1 post-infection. In patients with confirmed synovial Chlamydia infections, 0/8 had visible transcripts. In infected human Hep-2 cells, transcripts are visible from 11-48 hours post-infection.</text>
</comment>
<comment type="domain">
    <text evidence="1">Consists of an N-terminal domain, which is sufficient for the localization to the septal ring and is required for cell division, followed by a linker domain, and a C-terminal domain, which forms the translocation motor involved in chromosome segregation. The C-terminal domain can be further subdivided into alpha, beta and gamma subdomains. The alpha and beta subdomains form the DNA pump, and the gamma subdomain is a regulatory subdomain (By similarity).</text>
</comment>
<comment type="similarity">
    <text evidence="6">Belongs to the FtsK/SpoIIIE/SftA family.</text>
</comment>
<accession>O84744</accession>
<feature type="chain" id="PRO_0000098250" description="DNA translocase FtsK">
    <location>
        <begin position="1"/>
        <end position="799"/>
    </location>
</feature>
<feature type="transmembrane region" description="Helical" evidence="2">
    <location>
        <begin position="17"/>
        <end position="37"/>
    </location>
</feature>
<feature type="transmembrane region" description="Helical" evidence="2">
    <location>
        <begin position="52"/>
        <end position="72"/>
    </location>
</feature>
<feature type="transmembrane region" description="Helical" evidence="2">
    <location>
        <begin position="96"/>
        <end position="116"/>
    </location>
</feature>
<feature type="transmembrane region" description="Helical" evidence="2">
    <location>
        <begin position="129"/>
        <end position="149"/>
    </location>
</feature>
<feature type="transmembrane region" description="Helical" evidence="2">
    <location>
        <begin position="159"/>
        <end position="179"/>
    </location>
</feature>
<feature type="topological domain" description="Cytoplasmic" evidence="2">
    <location>
        <begin position="180"/>
        <end position="799"/>
    </location>
</feature>
<feature type="domain" description="FtsK" evidence="3">
    <location>
        <begin position="460"/>
        <end position="659"/>
    </location>
</feature>
<feature type="region of interest" description="Disordered" evidence="4">
    <location>
        <begin position="274"/>
        <end position="294"/>
    </location>
</feature>
<feature type="binding site" evidence="3">
    <location>
        <begin position="480"/>
        <end position="485"/>
    </location>
    <ligand>
        <name>ATP</name>
        <dbReference type="ChEBI" id="CHEBI:30616"/>
    </ligand>
</feature>
<reference key="1">
    <citation type="journal article" date="1998" name="Science">
        <title>Genome sequence of an obligate intracellular pathogen of humans: Chlamydia trachomatis.</title>
        <authorList>
            <person name="Stephens R.S."/>
            <person name="Kalman S."/>
            <person name="Lammel C.J."/>
            <person name="Fan J."/>
            <person name="Marathe R."/>
            <person name="Aravind L."/>
            <person name="Mitchell W.P."/>
            <person name="Olinger L."/>
            <person name="Tatusov R.L."/>
            <person name="Zhao Q."/>
            <person name="Koonin E.V."/>
            <person name="Davis R.W."/>
        </authorList>
    </citation>
    <scope>NUCLEOTIDE SEQUENCE [LARGE SCALE GENOMIC DNA]</scope>
    <source>
        <strain>ATCC VR-885 / DSM 19411 / UW-3/Cx</strain>
    </source>
</reference>
<reference key="2">
    <citation type="journal article" date="2001" name="Mol. Microbiol.">
        <title>Expression of Chlamydia trachomatis genes encoding products required for DNA synthesis and cell division during active versus persistent infection.</title>
        <authorList>
            <person name="Gerard H.C."/>
            <person name="Krausse-Opatz B."/>
            <person name="Wang Z."/>
            <person name="Rudy D."/>
            <person name="Rao J.P."/>
            <person name="Zeidler H."/>
            <person name="Schumacher H.R."/>
            <person name="Whittum-Hudson J.A."/>
            <person name="Koehler L."/>
            <person name="Hudson A.P."/>
        </authorList>
    </citation>
    <scope>INDUCTION</scope>
    <source>
        <strain>Serovar K</strain>
    </source>
</reference>
<organism>
    <name type="scientific">Chlamydia trachomatis serovar D (strain ATCC VR-885 / DSM 19411 / UW-3/Cx)</name>
    <dbReference type="NCBI Taxonomy" id="272561"/>
    <lineage>
        <taxon>Bacteria</taxon>
        <taxon>Pseudomonadati</taxon>
        <taxon>Chlamydiota</taxon>
        <taxon>Chlamydiia</taxon>
        <taxon>Chlamydiales</taxon>
        <taxon>Chlamydiaceae</taxon>
        <taxon>Chlamydia/Chlamydophila group</taxon>
        <taxon>Chlamydia</taxon>
    </lineage>
</organism>
<proteinExistence type="evidence at transcript level"/>
<name>FTSK_CHLTR</name>
<protein>
    <recommendedName>
        <fullName>DNA translocase FtsK</fullName>
    </recommendedName>
</protein>
<evidence type="ECO:0000250" key="1"/>
<evidence type="ECO:0000255" key="2"/>
<evidence type="ECO:0000255" key="3">
    <source>
        <dbReference type="PROSITE-ProRule" id="PRU00289"/>
    </source>
</evidence>
<evidence type="ECO:0000256" key="4">
    <source>
        <dbReference type="SAM" id="MobiDB-lite"/>
    </source>
</evidence>
<evidence type="ECO:0000269" key="5">
    <source>
    </source>
</evidence>
<evidence type="ECO:0000305" key="6"/>
<gene>
    <name type="primary">ftsK</name>
    <name type="ordered locus">CT_739</name>
</gene>